<comment type="function">
    <text evidence="2 4">Catalyzes the reaction that attaches fucose through an O-glycosidic linkage to a conserved serine or threonine residue in the consensus sequence C1-X-X-S/T-C2 of thrombospondin type I repeats (TSRs) where C1 and C2 are the first and second cysteines of the repeat, respectively (PubMed:28916755). O-fucosylates sporozoite proteins CSP and TRAP (PubMed:28916755). O-fucosylation regulates stability and intracellular trafficking of TRAP but not of CSP (By similarity). Probably by regulating protein O-fucosylation, may play a role in parasite transmission to the mosquito vector and/or infection of the vertebrate host hepatocytes; however, POFUT2 involvement in transmission/infection is controversial (By similarity).</text>
</comment>
<comment type="catalytic activity">
    <reaction evidence="4">
        <text>L-seryl-[protein] + GDP-beta-L-fucose = 3-O-(alpha-L-fucosyl)-L-seryl-[protein] + GDP + H(+)</text>
        <dbReference type="Rhea" id="RHEA:63644"/>
        <dbReference type="Rhea" id="RHEA-COMP:9863"/>
        <dbReference type="Rhea" id="RHEA-COMP:17914"/>
        <dbReference type="ChEBI" id="CHEBI:15378"/>
        <dbReference type="ChEBI" id="CHEBI:29999"/>
        <dbReference type="ChEBI" id="CHEBI:57273"/>
        <dbReference type="ChEBI" id="CHEBI:58189"/>
        <dbReference type="ChEBI" id="CHEBI:189632"/>
        <dbReference type="EC" id="2.4.1.221"/>
    </reaction>
    <physiologicalReaction direction="left-to-right" evidence="4">
        <dbReference type="Rhea" id="RHEA:63645"/>
    </physiologicalReaction>
</comment>
<comment type="catalytic activity">
    <reaction evidence="4">
        <text>L-threonyl-[protein] + GDP-beta-L-fucose = 3-O-(alpha-L-fucosyl)-L-threonyl-[protein] + GDP + H(+)</text>
        <dbReference type="Rhea" id="RHEA:70491"/>
        <dbReference type="Rhea" id="RHEA-COMP:11060"/>
        <dbReference type="Rhea" id="RHEA-COMP:17915"/>
        <dbReference type="ChEBI" id="CHEBI:15378"/>
        <dbReference type="ChEBI" id="CHEBI:30013"/>
        <dbReference type="ChEBI" id="CHEBI:57273"/>
        <dbReference type="ChEBI" id="CHEBI:58189"/>
        <dbReference type="ChEBI" id="CHEBI:189631"/>
        <dbReference type="EC" id="2.4.1.221"/>
    </reaction>
    <physiologicalReaction direction="left-to-right" evidence="4">
        <dbReference type="Rhea" id="RHEA:70492"/>
    </physiologicalReaction>
</comment>
<comment type="pathway">
    <text evidence="4">Protein modification; protein glycosylation.</text>
</comment>
<comment type="subcellular location">
    <subcellularLocation>
        <location evidence="2">Endoplasmic reticulum</location>
    </subcellularLocation>
</comment>
<comment type="similarity">
    <text evidence="6">Belongs to the glycosyltransferase 68 family.</text>
</comment>
<protein>
    <recommendedName>
        <fullName evidence="6">GDP-fucose protein O-fucosyltransferase 2</fullName>
        <ecNumber evidence="4">2.4.1.221</ecNumber>
    </recommendedName>
    <alternativeName>
        <fullName evidence="5">Protein O-fucosyltransferase 2</fullName>
    </alternativeName>
</protein>
<dbReference type="EC" id="2.4.1.221" evidence="4"/>
<dbReference type="EMBL" id="AAKM01000007">
    <property type="protein sequence ID" value="EDL44902.1"/>
    <property type="molecule type" value="Genomic_DNA"/>
</dbReference>
<dbReference type="RefSeq" id="XP_001614629.1">
    <property type="nucleotide sequence ID" value="XM_001614579.1"/>
</dbReference>
<dbReference type="SMR" id="A5K6G1"/>
<dbReference type="FunCoup" id="A5K6G1">
    <property type="interactions" value="51"/>
</dbReference>
<dbReference type="STRING" id="126793.A5K6G1"/>
<dbReference type="EnsemblProtists" id="EDL44902">
    <property type="protein sequence ID" value="EDL44902"/>
    <property type="gene ID" value="PVX_098900"/>
</dbReference>
<dbReference type="GeneID" id="5473920"/>
<dbReference type="KEGG" id="pvx:PVX_098900"/>
<dbReference type="VEuPathDB" id="PlasmoDB:PVX_098900"/>
<dbReference type="InParanoid" id="A5K6G1"/>
<dbReference type="OMA" id="RNAVWPI"/>
<dbReference type="PhylomeDB" id="A5K6G1"/>
<dbReference type="UniPathway" id="UPA00378"/>
<dbReference type="Proteomes" id="UP000008333">
    <property type="component" value="Chromosome 7"/>
</dbReference>
<dbReference type="GO" id="GO:0005783">
    <property type="term" value="C:endoplasmic reticulum"/>
    <property type="evidence" value="ECO:0007669"/>
    <property type="project" value="UniProtKB-SubCell"/>
</dbReference>
<dbReference type="GO" id="GO:0046922">
    <property type="term" value="F:peptide-O-fucosyltransferase activity"/>
    <property type="evidence" value="ECO:0000314"/>
    <property type="project" value="UniProtKB"/>
</dbReference>
<dbReference type="GO" id="GO:0006004">
    <property type="term" value="P:fucose metabolic process"/>
    <property type="evidence" value="ECO:0007669"/>
    <property type="project" value="UniProtKB-KW"/>
</dbReference>
<dbReference type="GO" id="GO:0036066">
    <property type="term" value="P:protein O-linked fucosylation"/>
    <property type="evidence" value="ECO:0000314"/>
    <property type="project" value="UniProtKB"/>
</dbReference>
<dbReference type="CDD" id="cd11298">
    <property type="entry name" value="O-FucT-2"/>
    <property type="match status" value="1"/>
</dbReference>
<dbReference type="Gene3D" id="3.40.50.11340">
    <property type="match status" value="1"/>
</dbReference>
<dbReference type="Gene3D" id="3.40.50.11350">
    <property type="match status" value="1"/>
</dbReference>
<dbReference type="InterPro" id="IPR019378">
    <property type="entry name" value="GDP-Fuc_O-FucTrfase"/>
</dbReference>
<dbReference type="InterPro" id="IPR045130">
    <property type="entry name" value="OFUT2-like"/>
</dbReference>
<dbReference type="PANTHER" id="PTHR13398">
    <property type="entry name" value="GDP-FUCOSE PROTEIN O-FUCOSYLTRANSFERASE 2"/>
    <property type="match status" value="1"/>
</dbReference>
<dbReference type="PANTHER" id="PTHR13398:SF0">
    <property type="entry name" value="GDP-FUCOSE PROTEIN O-FUCOSYLTRANSFERASE 2"/>
    <property type="match status" value="1"/>
</dbReference>
<dbReference type="Pfam" id="PF10250">
    <property type="entry name" value="O-FucT"/>
    <property type="match status" value="1"/>
</dbReference>
<organism evidence="8">
    <name type="scientific">Plasmodium vivax (strain Salvador I)</name>
    <dbReference type="NCBI Taxonomy" id="126793"/>
    <lineage>
        <taxon>Eukaryota</taxon>
        <taxon>Sar</taxon>
        <taxon>Alveolata</taxon>
        <taxon>Apicomplexa</taxon>
        <taxon>Aconoidasida</taxon>
        <taxon>Haemosporida</taxon>
        <taxon>Plasmodiidae</taxon>
        <taxon>Plasmodium</taxon>
        <taxon>Plasmodium (Plasmodium)</taxon>
    </lineage>
</organism>
<proteinExistence type="evidence at protein level"/>
<keyword id="KW-0119">Carbohydrate metabolism</keyword>
<keyword id="KW-0256">Endoplasmic reticulum</keyword>
<keyword id="KW-0294">Fucose metabolism</keyword>
<keyword id="KW-1185">Reference proteome</keyword>
<keyword id="KW-0732">Signal</keyword>
<keyword id="KW-0808">Transferase</keyword>
<reference evidence="8" key="1">
    <citation type="journal article" date="2008" name="Nature">
        <title>Comparative genomics of the neglected human malaria parasite Plasmodium vivax.</title>
        <authorList>
            <person name="Carlton J.M."/>
            <person name="Adams J.H."/>
            <person name="Silva J.C."/>
            <person name="Bidwell S.L."/>
            <person name="Lorenzi H."/>
            <person name="Caler E."/>
            <person name="Crabtree J."/>
            <person name="Angiuoli S.V."/>
            <person name="Merino E.F."/>
            <person name="Amedeo P."/>
            <person name="Cheng Q."/>
            <person name="Coulson R.M.R."/>
            <person name="Crabb B.S."/>
            <person name="del Portillo H.A."/>
            <person name="Essien K."/>
            <person name="Feldblyum T.V."/>
            <person name="Fernandez-Becerra C."/>
            <person name="Gilson P.R."/>
            <person name="Gueye A.H."/>
            <person name="Guo X."/>
            <person name="Kang'a S."/>
            <person name="Kooij T.W.A."/>
            <person name="Korsinczky M."/>
            <person name="Meyer E.V.-S."/>
            <person name="Nene V."/>
            <person name="Paulsen I."/>
            <person name="White O."/>
            <person name="Ralph S.A."/>
            <person name="Ren Q."/>
            <person name="Sargeant T.J."/>
            <person name="Salzberg S.L."/>
            <person name="Stoeckert C.J."/>
            <person name="Sullivan S.A."/>
            <person name="Yamamoto M.M."/>
            <person name="Hoffman S.L."/>
            <person name="Wortman J.R."/>
            <person name="Gardner M.J."/>
            <person name="Galinski M.R."/>
            <person name="Barnwell J.W."/>
            <person name="Fraser-Liggett C.M."/>
        </authorList>
    </citation>
    <scope>NUCLEOTIDE SEQUENCE [LARGE SCALE GENOMIC DNA]</scope>
    <source>
        <strain evidence="8">Salvador I</strain>
    </source>
</reference>
<reference evidence="6" key="2">
    <citation type="journal article" date="2017" name="Nat. Commun.">
        <title>Protein O-fucosylation in Plasmodium falciparum ensures efficient infection of mosquito and vertebrate hosts.</title>
        <authorList>
            <person name="Lopaticki S."/>
            <person name="Yang A.S.P."/>
            <person name="John A."/>
            <person name="Scott N.E."/>
            <person name="Lingford J.P."/>
            <person name="O'Neill M.T."/>
            <person name="Erickson S.M."/>
            <person name="McKenzie N.C."/>
            <person name="Jennison C."/>
            <person name="Whitehead L.W."/>
            <person name="Douglas D.N."/>
            <person name="Kneteman N.M."/>
            <person name="Goddard-Borger E.D."/>
            <person name="Boddey J.A."/>
        </authorList>
    </citation>
    <scope>FUNCTION</scope>
    <scope>CATALYTIC ACTIVITY</scope>
    <scope>PATHWAY</scope>
</reference>
<evidence type="ECO:0000250" key="1">
    <source>
        <dbReference type="UniProtKB" id="Q9Y2G5"/>
    </source>
</evidence>
<evidence type="ECO:0000250" key="2">
    <source>
        <dbReference type="UniProtKB" id="W7K6N5"/>
    </source>
</evidence>
<evidence type="ECO:0000255" key="3"/>
<evidence type="ECO:0000269" key="4">
    <source>
    </source>
</evidence>
<evidence type="ECO:0000303" key="5">
    <source>
    </source>
</evidence>
<evidence type="ECO:0000305" key="6"/>
<evidence type="ECO:0000312" key="7">
    <source>
        <dbReference type="EMBL" id="EDL44902.1"/>
    </source>
</evidence>
<evidence type="ECO:0000312" key="8">
    <source>
        <dbReference type="Proteomes" id="UP000008333"/>
    </source>
</evidence>
<sequence>MKGRAHIWVALLLACLPPRFRNLDKDVSSPVCRTDDVYTGDAFYPFKKKKYVLYDVHIGEGFNLQKEVLYRVALAVYYLNQEERTHVHYLVLPPWCYVTHWGRERTNARIKWSIFFNLKALQNVIPVMEYAEYEGQFGPHTDYILSYRHIIGEWPKRGDKKSFQVLKLDKCQVKGYKLKKNLRKNCDHKYSVEYSGKCTNVKGKKMECLEFFFITSHFVSSTLLDIFQYDADSVLIKHGSNILVAFMNELVDANLEDVLPYSEDLINEGDQFVEKNFKSSKNYISCHLRYTDFRKISTYDVSPVGISLLKLLYIMFLRKSTLIFVSTDEKKEVKKVIDSQFPQFKHFFFFYENEKLHTGQVAIVDQWICARSGTFVGNIFSRFSMHIKWERSLIGKGGPDHNLDLCGYSISTNHELRKKYSDVQDAHLDEEALQKLRPLYMRLSQKDRDFLRTICYDFAHYYPQNVSIYRRGERREEGRLM</sequence>
<accession>A5K6G1</accession>
<name>OFUT2_PLAVS</name>
<gene>
    <name evidence="5" type="primary">POFUT2</name>
    <name evidence="7" type="ORF">PVX_098900</name>
</gene>
<feature type="signal peptide" evidence="3">
    <location>
        <begin position="1"/>
        <end position="22"/>
    </location>
</feature>
<feature type="chain" id="PRO_5002685082" description="GDP-fucose protein O-fucosyltransferase 2" evidence="3">
    <location>
        <begin position="23"/>
        <end position="481"/>
    </location>
</feature>
<feature type="active site" description="Proton acceptor" evidence="1">
    <location>
        <position position="60"/>
    </location>
</feature>
<feature type="binding site" evidence="1">
    <location>
        <begin position="59"/>
        <end position="63"/>
    </location>
    <ligand>
        <name>GDP-beta-L-fucose</name>
        <dbReference type="ChEBI" id="CHEBI:57273"/>
    </ligand>
</feature>
<feature type="binding site" evidence="1">
    <location>
        <begin position="287"/>
        <end position="289"/>
    </location>
    <ligand>
        <name>GDP-beta-L-fucose</name>
        <dbReference type="ChEBI" id="CHEBI:57273"/>
    </ligand>
</feature>
<feature type="binding site" evidence="1">
    <location>
        <position position="365"/>
    </location>
    <ligand>
        <name>GDP-beta-L-fucose</name>
        <dbReference type="ChEBI" id="CHEBI:57273"/>
    </ligand>
</feature>
<feature type="binding site" evidence="1">
    <location>
        <begin position="382"/>
        <end position="383"/>
    </location>
    <ligand>
        <name>GDP-beta-L-fucose</name>
        <dbReference type="ChEBI" id="CHEBI:57273"/>
    </ligand>
</feature>
<feature type="site" description="Essential for catalytic activity" evidence="1">
    <location>
        <position position="390"/>
    </location>
</feature>